<protein>
    <recommendedName>
        <fullName evidence="2">Elongation factor Tu</fullName>
        <shortName evidence="2">EF-Tu</shortName>
        <ecNumber evidence="2">3.6.5.3</ecNumber>
    </recommendedName>
</protein>
<reference key="1">
    <citation type="journal article" date="2006" name="J. Bacteriol.">
        <title>Pathogenomic sequence analysis of Bacillus cereus and Bacillus thuringiensis isolates closely related to Bacillus anthracis.</title>
        <authorList>
            <person name="Han C.S."/>
            <person name="Xie G."/>
            <person name="Challacombe J.F."/>
            <person name="Altherr M.R."/>
            <person name="Bhotika S.S."/>
            <person name="Bruce D."/>
            <person name="Campbell C.S."/>
            <person name="Campbell M.L."/>
            <person name="Chen J."/>
            <person name="Chertkov O."/>
            <person name="Cleland C."/>
            <person name="Dimitrijevic M."/>
            <person name="Doggett N.A."/>
            <person name="Fawcett J.J."/>
            <person name="Glavina T."/>
            <person name="Goodwin L.A."/>
            <person name="Hill K.K."/>
            <person name="Hitchcock P."/>
            <person name="Jackson P.J."/>
            <person name="Keim P."/>
            <person name="Kewalramani A.R."/>
            <person name="Longmire J."/>
            <person name="Lucas S."/>
            <person name="Malfatti S."/>
            <person name="McMurry K."/>
            <person name="Meincke L.J."/>
            <person name="Misra M."/>
            <person name="Moseman B.L."/>
            <person name="Mundt M."/>
            <person name="Munk A.C."/>
            <person name="Okinaka R.T."/>
            <person name="Parson-Quintana B."/>
            <person name="Reilly L.P."/>
            <person name="Richardson P."/>
            <person name="Robinson D.L."/>
            <person name="Rubin E."/>
            <person name="Saunders E."/>
            <person name="Tapia R."/>
            <person name="Tesmer J.G."/>
            <person name="Thayer N."/>
            <person name="Thompson L.S."/>
            <person name="Tice H."/>
            <person name="Ticknor L.O."/>
            <person name="Wills P.L."/>
            <person name="Brettin T.S."/>
            <person name="Gilna P."/>
        </authorList>
    </citation>
    <scope>NUCLEOTIDE SEQUENCE [LARGE SCALE GENOMIC DNA]</scope>
    <source>
        <strain>ZK / E33L</strain>
    </source>
</reference>
<feature type="chain" id="PRO_1000015606" description="Elongation factor Tu">
    <location>
        <begin position="1"/>
        <end position="395"/>
    </location>
</feature>
<feature type="domain" description="tr-type G">
    <location>
        <begin position="10"/>
        <end position="204"/>
    </location>
</feature>
<feature type="region of interest" description="G1" evidence="1">
    <location>
        <begin position="19"/>
        <end position="26"/>
    </location>
</feature>
<feature type="region of interest" description="G2" evidence="1">
    <location>
        <begin position="60"/>
        <end position="64"/>
    </location>
</feature>
<feature type="region of interest" description="G3" evidence="1">
    <location>
        <begin position="81"/>
        <end position="84"/>
    </location>
</feature>
<feature type="region of interest" description="G4" evidence="1">
    <location>
        <begin position="136"/>
        <end position="139"/>
    </location>
</feature>
<feature type="region of interest" description="G5" evidence="1">
    <location>
        <begin position="174"/>
        <end position="176"/>
    </location>
</feature>
<feature type="binding site" evidence="2">
    <location>
        <begin position="19"/>
        <end position="26"/>
    </location>
    <ligand>
        <name>GTP</name>
        <dbReference type="ChEBI" id="CHEBI:37565"/>
    </ligand>
</feature>
<feature type="binding site" evidence="2">
    <location>
        <position position="26"/>
    </location>
    <ligand>
        <name>Mg(2+)</name>
        <dbReference type="ChEBI" id="CHEBI:18420"/>
    </ligand>
</feature>
<feature type="binding site" evidence="2">
    <location>
        <begin position="81"/>
        <end position="85"/>
    </location>
    <ligand>
        <name>GTP</name>
        <dbReference type="ChEBI" id="CHEBI:37565"/>
    </ligand>
</feature>
<feature type="binding site" evidence="2">
    <location>
        <begin position="136"/>
        <end position="139"/>
    </location>
    <ligand>
        <name>GTP</name>
        <dbReference type="ChEBI" id="CHEBI:37565"/>
    </ligand>
</feature>
<sequence length="395" mass="42939">MAKAKFERSKPHVNIGTIGHVDHGKTTLTAAITTVLAKAGGAEARGYDQIDAAPEERERGITISTAHVEYETETRHYAHVDCPGHADYVKNMITGAAQMDGGILVVSAADGPMPQTREHILLSRQVGVPYIVVFLNKCDMVDDEELLELVEMEVRDLLSEYGFPGDDIPVIKGSALKALQGEADWEAKIIELMAEVDAYIPTPERETDKPFLMPVEDVFSITGRGTVATGRVERGIVKVGDVVEIIGLAEENASTTVTGVEMFRKLLDQAQAGDNIGALLRGVAREDIQRGQVLAKSGSVKAHAKFKAEVFVLSKEEGGRHTPFFANYRPQFYFRTTDVTGIIQLPEGTEMVMPGDNIEMTIELIAPIAIEEGTKFSIREGGRTVGYGVVATIVE</sequence>
<dbReference type="EC" id="3.6.5.3" evidence="2"/>
<dbReference type="EMBL" id="CP000001">
    <property type="protein sequence ID" value="AAU20129.1"/>
    <property type="molecule type" value="Genomic_DNA"/>
</dbReference>
<dbReference type="RefSeq" id="WP_001029614.1">
    <property type="nucleotide sequence ID" value="NZ_CP009968.1"/>
</dbReference>
<dbReference type="SMR" id="Q63H92"/>
<dbReference type="GeneID" id="93010945"/>
<dbReference type="KEGG" id="bcz:BCE33L0102"/>
<dbReference type="PATRIC" id="fig|288681.22.peg.49"/>
<dbReference type="Proteomes" id="UP000002612">
    <property type="component" value="Chromosome"/>
</dbReference>
<dbReference type="GO" id="GO:0005829">
    <property type="term" value="C:cytosol"/>
    <property type="evidence" value="ECO:0007669"/>
    <property type="project" value="TreeGrafter"/>
</dbReference>
<dbReference type="GO" id="GO:0005525">
    <property type="term" value="F:GTP binding"/>
    <property type="evidence" value="ECO:0007669"/>
    <property type="project" value="UniProtKB-UniRule"/>
</dbReference>
<dbReference type="GO" id="GO:0003924">
    <property type="term" value="F:GTPase activity"/>
    <property type="evidence" value="ECO:0007669"/>
    <property type="project" value="InterPro"/>
</dbReference>
<dbReference type="GO" id="GO:0003746">
    <property type="term" value="F:translation elongation factor activity"/>
    <property type="evidence" value="ECO:0007669"/>
    <property type="project" value="UniProtKB-UniRule"/>
</dbReference>
<dbReference type="CDD" id="cd01884">
    <property type="entry name" value="EF_Tu"/>
    <property type="match status" value="1"/>
</dbReference>
<dbReference type="CDD" id="cd03697">
    <property type="entry name" value="EFTU_II"/>
    <property type="match status" value="1"/>
</dbReference>
<dbReference type="CDD" id="cd03707">
    <property type="entry name" value="EFTU_III"/>
    <property type="match status" value="1"/>
</dbReference>
<dbReference type="FunFam" id="2.40.30.10:FF:000001">
    <property type="entry name" value="Elongation factor Tu"/>
    <property type="match status" value="1"/>
</dbReference>
<dbReference type="FunFam" id="3.40.50.300:FF:000003">
    <property type="entry name" value="Elongation factor Tu"/>
    <property type="match status" value="1"/>
</dbReference>
<dbReference type="Gene3D" id="3.40.50.300">
    <property type="entry name" value="P-loop containing nucleotide triphosphate hydrolases"/>
    <property type="match status" value="1"/>
</dbReference>
<dbReference type="Gene3D" id="2.40.30.10">
    <property type="entry name" value="Translation factors"/>
    <property type="match status" value="2"/>
</dbReference>
<dbReference type="HAMAP" id="MF_00118_B">
    <property type="entry name" value="EF_Tu_B"/>
    <property type="match status" value="1"/>
</dbReference>
<dbReference type="InterPro" id="IPR041709">
    <property type="entry name" value="EF-Tu_GTP-bd"/>
</dbReference>
<dbReference type="InterPro" id="IPR050055">
    <property type="entry name" value="EF-Tu_GTPase"/>
</dbReference>
<dbReference type="InterPro" id="IPR004161">
    <property type="entry name" value="EFTu-like_2"/>
</dbReference>
<dbReference type="InterPro" id="IPR033720">
    <property type="entry name" value="EFTU_2"/>
</dbReference>
<dbReference type="InterPro" id="IPR031157">
    <property type="entry name" value="G_TR_CS"/>
</dbReference>
<dbReference type="InterPro" id="IPR027417">
    <property type="entry name" value="P-loop_NTPase"/>
</dbReference>
<dbReference type="InterPro" id="IPR005225">
    <property type="entry name" value="Small_GTP-bd"/>
</dbReference>
<dbReference type="InterPro" id="IPR000795">
    <property type="entry name" value="T_Tr_GTP-bd_dom"/>
</dbReference>
<dbReference type="InterPro" id="IPR009000">
    <property type="entry name" value="Transl_B-barrel_sf"/>
</dbReference>
<dbReference type="InterPro" id="IPR009001">
    <property type="entry name" value="Transl_elong_EF1A/Init_IF2_C"/>
</dbReference>
<dbReference type="InterPro" id="IPR004541">
    <property type="entry name" value="Transl_elong_EFTu/EF1A_bac/org"/>
</dbReference>
<dbReference type="InterPro" id="IPR004160">
    <property type="entry name" value="Transl_elong_EFTu/EF1A_C"/>
</dbReference>
<dbReference type="NCBIfam" id="TIGR00485">
    <property type="entry name" value="EF-Tu"/>
    <property type="match status" value="1"/>
</dbReference>
<dbReference type="NCBIfam" id="NF000766">
    <property type="entry name" value="PRK00049.1"/>
    <property type="match status" value="1"/>
</dbReference>
<dbReference type="NCBIfam" id="NF009372">
    <property type="entry name" value="PRK12735.1"/>
    <property type="match status" value="1"/>
</dbReference>
<dbReference type="NCBIfam" id="NF009373">
    <property type="entry name" value="PRK12736.1"/>
    <property type="match status" value="1"/>
</dbReference>
<dbReference type="NCBIfam" id="TIGR00231">
    <property type="entry name" value="small_GTP"/>
    <property type="match status" value="1"/>
</dbReference>
<dbReference type="PANTHER" id="PTHR43721:SF22">
    <property type="entry name" value="ELONGATION FACTOR TU, MITOCHONDRIAL"/>
    <property type="match status" value="1"/>
</dbReference>
<dbReference type="PANTHER" id="PTHR43721">
    <property type="entry name" value="ELONGATION FACTOR TU-RELATED"/>
    <property type="match status" value="1"/>
</dbReference>
<dbReference type="Pfam" id="PF00009">
    <property type="entry name" value="GTP_EFTU"/>
    <property type="match status" value="1"/>
</dbReference>
<dbReference type="Pfam" id="PF03144">
    <property type="entry name" value="GTP_EFTU_D2"/>
    <property type="match status" value="1"/>
</dbReference>
<dbReference type="Pfam" id="PF03143">
    <property type="entry name" value="GTP_EFTU_D3"/>
    <property type="match status" value="1"/>
</dbReference>
<dbReference type="PRINTS" id="PR00315">
    <property type="entry name" value="ELONGATNFCT"/>
</dbReference>
<dbReference type="SUPFAM" id="SSF50465">
    <property type="entry name" value="EF-Tu/eEF-1alpha/eIF2-gamma C-terminal domain"/>
    <property type="match status" value="1"/>
</dbReference>
<dbReference type="SUPFAM" id="SSF52540">
    <property type="entry name" value="P-loop containing nucleoside triphosphate hydrolases"/>
    <property type="match status" value="1"/>
</dbReference>
<dbReference type="SUPFAM" id="SSF50447">
    <property type="entry name" value="Translation proteins"/>
    <property type="match status" value="1"/>
</dbReference>
<dbReference type="PROSITE" id="PS00301">
    <property type="entry name" value="G_TR_1"/>
    <property type="match status" value="1"/>
</dbReference>
<dbReference type="PROSITE" id="PS51722">
    <property type="entry name" value="G_TR_2"/>
    <property type="match status" value="1"/>
</dbReference>
<organism>
    <name type="scientific">Bacillus cereus (strain ZK / E33L)</name>
    <dbReference type="NCBI Taxonomy" id="288681"/>
    <lineage>
        <taxon>Bacteria</taxon>
        <taxon>Bacillati</taxon>
        <taxon>Bacillota</taxon>
        <taxon>Bacilli</taxon>
        <taxon>Bacillales</taxon>
        <taxon>Bacillaceae</taxon>
        <taxon>Bacillus</taxon>
        <taxon>Bacillus cereus group</taxon>
    </lineage>
</organism>
<keyword id="KW-0963">Cytoplasm</keyword>
<keyword id="KW-0251">Elongation factor</keyword>
<keyword id="KW-0342">GTP-binding</keyword>
<keyword id="KW-0378">Hydrolase</keyword>
<keyword id="KW-0460">Magnesium</keyword>
<keyword id="KW-0479">Metal-binding</keyword>
<keyword id="KW-0547">Nucleotide-binding</keyword>
<keyword id="KW-0648">Protein biosynthesis</keyword>
<comment type="function">
    <text evidence="2">GTP hydrolase that promotes the GTP-dependent binding of aminoacyl-tRNA to the A-site of ribosomes during protein biosynthesis.</text>
</comment>
<comment type="catalytic activity">
    <reaction evidence="2">
        <text>GTP + H2O = GDP + phosphate + H(+)</text>
        <dbReference type="Rhea" id="RHEA:19669"/>
        <dbReference type="ChEBI" id="CHEBI:15377"/>
        <dbReference type="ChEBI" id="CHEBI:15378"/>
        <dbReference type="ChEBI" id="CHEBI:37565"/>
        <dbReference type="ChEBI" id="CHEBI:43474"/>
        <dbReference type="ChEBI" id="CHEBI:58189"/>
        <dbReference type="EC" id="3.6.5.3"/>
    </reaction>
    <physiologicalReaction direction="left-to-right" evidence="2">
        <dbReference type="Rhea" id="RHEA:19670"/>
    </physiologicalReaction>
</comment>
<comment type="subunit">
    <text evidence="2">Monomer.</text>
</comment>
<comment type="subcellular location">
    <subcellularLocation>
        <location evidence="2">Cytoplasm</location>
    </subcellularLocation>
</comment>
<comment type="similarity">
    <text evidence="2">Belongs to the TRAFAC class translation factor GTPase superfamily. Classic translation factor GTPase family. EF-Tu/EF-1A subfamily.</text>
</comment>
<evidence type="ECO:0000250" key="1"/>
<evidence type="ECO:0000255" key="2">
    <source>
        <dbReference type="HAMAP-Rule" id="MF_00118"/>
    </source>
</evidence>
<accession>Q63H92</accession>
<gene>
    <name evidence="2" type="primary">tuf</name>
    <name type="ordered locus">BCE33L0102</name>
</gene>
<proteinExistence type="inferred from homology"/>
<name>EFTU_BACCZ</name>